<dbReference type="EMBL" id="AAHF01000007">
    <property type="protein sequence ID" value="EAL88031.1"/>
    <property type="molecule type" value="Genomic_DNA"/>
</dbReference>
<dbReference type="RefSeq" id="XP_750069.1">
    <property type="nucleotide sequence ID" value="XM_744976.1"/>
</dbReference>
<dbReference type="SMR" id="Q4WKA1"/>
<dbReference type="STRING" id="330879.Q4WKA1"/>
<dbReference type="GlyCosmos" id="Q4WKA1">
    <property type="glycosylation" value="1 site, No reported glycans"/>
</dbReference>
<dbReference type="EnsemblFungi" id="EAL88031">
    <property type="protein sequence ID" value="EAL88031"/>
    <property type="gene ID" value="AFUA_1G03200"/>
</dbReference>
<dbReference type="GeneID" id="3507949"/>
<dbReference type="KEGG" id="afm:AFUA_1G03200"/>
<dbReference type="VEuPathDB" id="FungiDB:Afu1g03200"/>
<dbReference type="eggNOG" id="KOG0254">
    <property type="taxonomic scope" value="Eukaryota"/>
</dbReference>
<dbReference type="HOGENOM" id="CLU_000960_28_2_1"/>
<dbReference type="InParanoid" id="Q4WKA1"/>
<dbReference type="OMA" id="MFGIFFY"/>
<dbReference type="OrthoDB" id="440755at2759"/>
<dbReference type="Proteomes" id="UP000002530">
    <property type="component" value="Chromosome 1"/>
</dbReference>
<dbReference type="GO" id="GO:0016020">
    <property type="term" value="C:membrane"/>
    <property type="evidence" value="ECO:0000318"/>
    <property type="project" value="GO_Central"/>
</dbReference>
<dbReference type="GO" id="GO:0022857">
    <property type="term" value="F:transmembrane transporter activity"/>
    <property type="evidence" value="ECO:0007669"/>
    <property type="project" value="InterPro"/>
</dbReference>
<dbReference type="CDD" id="cd17321">
    <property type="entry name" value="MFS_MMR_MDR_like"/>
    <property type="match status" value="1"/>
</dbReference>
<dbReference type="Gene3D" id="1.20.1250.20">
    <property type="entry name" value="MFS general substrate transporter like domains"/>
    <property type="match status" value="2"/>
</dbReference>
<dbReference type="InterPro" id="IPR011701">
    <property type="entry name" value="MFS"/>
</dbReference>
<dbReference type="InterPro" id="IPR020846">
    <property type="entry name" value="MFS_dom"/>
</dbReference>
<dbReference type="InterPro" id="IPR036259">
    <property type="entry name" value="MFS_trans_sf"/>
</dbReference>
<dbReference type="PANTHER" id="PTHR42718">
    <property type="entry name" value="MAJOR FACILITATOR SUPERFAMILY MULTIDRUG TRANSPORTER MFSC"/>
    <property type="match status" value="1"/>
</dbReference>
<dbReference type="PANTHER" id="PTHR42718:SF9">
    <property type="entry name" value="MAJOR FACILITATOR SUPERFAMILY MULTIDRUG TRANSPORTER MFSC"/>
    <property type="match status" value="1"/>
</dbReference>
<dbReference type="Pfam" id="PF07690">
    <property type="entry name" value="MFS_1"/>
    <property type="match status" value="1"/>
</dbReference>
<dbReference type="SUPFAM" id="SSF103473">
    <property type="entry name" value="MFS general substrate transporter"/>
    <property type="match status" value="1"/>
</dbReference>
<dbReference type="PROSITE" id="PS50850">
    <property type="entry name" value="MFS"/>
    <property type="match status" value="1"/>
</dbReference>
<feature type="chain" id="PRO_0000445109" description="Major facilitator superfamily multidrug transporter mfsC">
    <location>
        <begin position="1"/>
        <end position="518"/>
    </location>
</feature>
<feature type="transmembrane region" description="Helical" evidence="1">
    <location>
        <begin position="27"/>
        <end position="47"/>
    </location>
</feature>
<feature type="transmembrane region" description="Helical" evidence="1">
    <location>
        <begin position="65"/>
        <end position="85"/>
    </location>
</feature>
<feature type="transmembrane region" description="Helical" evidence="1">
    <location>
        <begin position="88"/>
        <end position="108"/>
    </location>
</feature>
<feature type="transmembrane region" description="Helical" evidence="1">
    <location>
        <begin position="123"/>
        <end position="143"/>
    </location>
</feature>
<feature type="transmembrane region" description="Helical" evidence="1">
    <location>
        <begin position="152"/>
        <end position="172"/>
    </location>
</feature>
<feature type="transmembrane region" description="Helical" evidence="1">
    <location>
        <begin position="183"/>
        <end position="203"/>
    </location>
</feature>
<feature type="transmembrane region" description="Helical" evidence="1">
    <location>
        <begin position="212"/>
        <end position="232"/>
    </location>
</feature>
<feature type="transmembrane region" description="Helical" evidence="1">
    <location>
        <begin position="242"/>
        <end position="262"/>
    </location>
</feature>
<feature type="transmembrane region" description="Helical" evidence="1">
    <location>
        <begin position="281"/>
        <end position="301"/>
    </location>
</feature>
<feature type="transmembrane region" description="Helical" evidence="1">
    <location>
        <begin position="315"/>
        <end position="335"/>
    </location>
</feature>
<feature type="transmembrane region" description="Helical" evidence="1">
    <location>
        <begin position="347"/>
        <end position="367"/>
    </location>
</feature>
<feature type="transmembrane region" description="Helical" evidence="1">
    <location>
        <begin position="380"/>
        <end position="400"/>
    </location>
</feature>
<feature type="transmembrane region" description="Helical" evidence="1">
    <location>
        <begin position="409"/>
        <end position="429"/>
    </location>
</feature>
<feature type="transmembrane region" description="Helical" evidence="1">
    <location>
        <begin position="455"/>
        <end position="475"/>
    </location>
</feature>
<feature type="glycosylation site" description="N-linked (GlcNAc...) asparagine" evidence="2">
    <location>
        <position position="233"/>
    </location>
</feature>
<name>MFSC_ASPFU</name>
<accession>Q4WKA1</accession>
<comment type="function">
    <text evidence="7">Major facilitator superfamily transporter that may be involved in A.fumigatus adaptation to azoles such as vorizonazole.</text>
</comment>
<comment type="subcellular location">
    <subcellularLocation>
        <location evidence="1">Membrane</location>
        <topology>Multi-pass membrane protein</topology>
    </subcellularLocation>
</comment>
<comment type="induction">
    <text evidence="3 4">Expression is induced upon voriconazole treatment (PubMed:16622700). Expression is also induced during germination (PubMed:18796135).</text>
</comment>
<comment type="similarity">
    <text evidence="6">Belongs to the major facilitator superfamily. EmrB family.</text>
</comment>
<protein>
    <recommendedName>
        <fullName evidence="5">Major facilitator superfamily multidrug transporter mfsC</fullName>
    </recommendedName>
</protein>
<proteinExistence type="evidence at transcript level"/>
<evidence type="ECO:0000255" key="1"/>
<evidence type="ECO:0000255" key="2">
    <source>
        <dbReference type="PROSITE-ProRule" id="PRU00498"/>
    </source>
</evidence>
<evidence type="ECO:0000269" key="3">
    <source>
    </source>
</evidence>
<evidence type="ECO:0000269" key="4">
    <source>
    </source>
</evidence>
<evidence type="ECO:0000303" key="5">
    <source>
    </source>
</evidence>
<evidence type="ECO:0000305" key="6"/>
<evidence type="ECO:0000305" key="7">
    <source>
    </source>
</evidence>
<organism>
    <name type="scientific">Aspergillus fumigatus (strain ATCC MYA-4609 / CBS 101355 / FGSC A1100 / Af293)</name>
    <name type="common">Neosartorya fumigata</name>
    <dbReference type="NCBI Taxonomy" id="330879"/>
    <lineage>
        <taxon>Eukaryota</taxon>
        <taxon>Fungi</taxon>
        <taxon>Dikarya</taxon>
        <taxon>Ascomycota</taxon>
        <taxon>Pezizomycotina</taxon>
        <taxon>Eurotiomycetes</taxon>
        <taxon>Eurotiomycetidae</taxon>
        <taxon>Eurotiales</taxon>
        <taxon>Aspergillaceae</taxon>
        <taxon>Aspergillus</taxon>
        <taxon>Aspergillus subgen. Fumigati</taxon>
    </lineage>
</organism>
<reference key="1">
    <citation type="journal article" date="2005" name="Nature">
        <title>Genomic sequence of the pathogenic and allergenic filamentous fungus Aspergillus fumigatus.</title>
        <authorList>
            <person name="Nierman W.C."/>
            <person name="Pain A."/>
            <person name="Anderson M.J."/>
            <person name="Wortman J.R."/>
            <person name="Kim H.S."/>
            <person name="Arroyo J."/>
            <person name="Berriman M."/>
            <person name="Abe K."/>
            <person name="Archer D.B."/>
            <person name="Bermejo C."/>
            <person name="Bennett J.W."/>
            <person name="Bowyer P."/>
            <person name="Chen D."/>
            <person name="Collins M."/>
            <person name="Coulsen R."/>
            <person name="Davies R."/>
            <person name="Dyer P.S."/>
            <person name="Farman M.L."/>
            <person name="Fedorova N."/>
            <person name="Fedorova N.D."/>
            <person name="Feldblyum T.V."/>
            <person name="Fischer R."/>
            <person name="Fosker N."/>
            <person name="Fraser A."/>
            <person name="Garcia J.L."/>
            <person name="Garcia M.J."/>
            <person name="Goble A."/>
            <person name="Goldman G.H."/>
            <person name="Gomi K."/>
            <person name="Griffith-Jones S."/>
            <person name="Gwilliam R."/>
            <person name="Haas B.J."/>
            <person name="Haas H."/>
            <person name="Harris D.E."/>
            <person name="Horiuchi H."/>
            <person name="Huang J."/>
            <person name="Humphray S."/>
            <person name="Jimenez J."/>
            <person name="Keller N."/>
            <person name="Khouri H."/>
            <person name="Kitamoto K."/>
            <person name="Kobayashi T."/>
            <person name="Konzack S."/>
            <person name="Kulkarni R."/>
            <person name="Kumagai T."/>
            <person name="Lafton A."/>
            <person name="Latge J.-P."/>
            <person name="Li W."/>
            <person name="Lord A."/>
            <person name="Lu C."/>
            <person name="Majoros W.H."/>
            <person name="May G.S."/>
            <person name="Miller B.L."/>
            <person name="Mohamoud Y."/>
            <person name="Molina M."/>
            <person name="Monod M."/>
            <person name="Mouyna I."/>
            <person name="Mulligan S."/>
            <person name="Murphy L.D."/>
            <person name="O'Neil S."/>
            <person name="Paulsen I."/>
            <person name="Penalva M.A."/>
            <person name="Pertea M."/>
            <person name="Price C."/>
            <person name="Pritchard B.L."/>
            <person name="Quail M.A."/>
            <person name="Rabbinowitsch E."/>
            <person name="Rawlins N."/>
            <person name="Rajandream M.A."/>
            <person name="Reichard U."/>
            <person name="Renauld H."/>
            <person name="Robson G.D."/>
            <person name="Rodriguez de Cordoba S."/>
            <person name="Rodriguez-Pena J.M."/>
            <person name="Ronning C.M."/>
            <person name="Rutter S."/>
            <person name="Salzberg S.L."/>
            <person name="Sanchez M."/>
            <person name="Sanchez-Ferrero J.C."/>
            <person name="Saunders D."/>
            <person name="Seeger K."/>
            <person name="Squares R."/>
            <person name="Squares S."/>
            <person name="Takeuchi M."/>
            <person name="Tekaia F."/>
            <person name="Turner G."/>
            <person name="Vazquez de Aldana C.R."/>
            <person name="Weidman J."/>
            <person name="White O."/>
            <person name="Woodward J.R."/>
            <person name="Yu J.-H."/>
            <person name="Fraser C.M."/>
            <person name="Galagan J.E."/>
            <person name="Asai K."/>
            <person name="Machida M."/>
            <person name="Hall N."/>
            <person name="Barrell B.G."/>
            <person name="Denning D.W."/>
        </authorList>
    </citation>
    <scope>NUCLEOTIDE SEQUENCE [LARGE SCALE GENOMIC DNA]</scope>
    <source>
        <strain>ATCC MYA-4609 / CBS 101355 / FGSC A1100 / Af293</strain>
    </source>
</reference>
<reference key="2">
    <citation type="journal article" date="2006" name="Curr. Genet.">
        <title>Transcriptome analysis of Aspergillus fumigatus exposed to voriconazole.</title>
        <authorList>
            <person name="da Silva Ferreira M.E."/>
            <person name="Malavazi I."/>
            <person name="Savoldi M."/>
            <person name="Brakhage A.A."/>
            <person name="Goldman M.H."/>
            <person name="Kim H.S."/>
            <person name="Nierman W.C."/>
            <person name="Goldman G.H."/>
        </authorList>
    </citation>
    <scope>IDENTIFICATION</scope>
    <scope>INDUCTION</scope>
    <scope>FUNCTION</scope>
</reference>
<reference key="3">
    <citation type="journal article" date="2008" name="BMC Genomics">
        <title>Transcriptomic analysis of the exit from dormancy of Aspergillus fumigatus conidia.</title>
        <authorList>
            <person name="Lamarre C."/>
            <person name="Sokol S."/>
            <person name="Debeaupuis J.P."/>
            <person name="Henry C."/>
            <person name="Lacroix C."/>
            <person name="Glaser P."/>
            <person name="Coppee J.Y."/>
            <person name="Francois J.M."/>
            <person name="Latge J.P."/>
        </authorList>
    </citation>
    <scope>INDUCTION</scope>
</reference>
<keyword id="KW-0325">Glycoprotein</keyword>
<keyword id="KW-0472">Membrane</keyword>
<keyword id="KW-1185">Reference proteome</keyword>
<keyword id="KW-0812">Transmembrane</keyword>
<keyword id="KW-1133">Transmembrane helix</keyword>
<keyword id="KW-0813">Transport</keyword>
<gene>
    <name evidence="5" type="primary">mfsC</name>
    <name type="ORF">AFUA_1G03200</name>
</gene>
<sequence>MTSNKKSRLPPYQPGEHVSPSVHLNCVLLTTTVVNFLDLFQLSSVLFALPNIQQALGFASEDINWVLIVYNITFAAFLLIAGQLGQRFGLEKIFIAGTATLTISNVINTTAPNKGALLAGRAISGVGAGLTAPNGLAILSNTFPDPESRNKALAIYTACGPLGSTIGTVVGSHLACMSGWRSIFWLCLILTGLSTILACLFLPRFAKRKDMPIDIPGTVVFTAGVALLVYGLNDSSRRGWTSAAMLTGIILGVCLLFVFLWVEAKVSNPAISSYLWKSGPFLVMLVAIFAFGGSFSTWFFISTQLCVNLLGYSTILTAVYFLPAAFAAIASGVFATPLIRLAGEKNILVAGLAITAAGAVAWAFAGPRIGPAVPTTGRDTAIIFVIGSPVALVPTQSILLREVEAGNHAVAGALFNTAYQVGASVILAGANALMDRSRANVQGVRQVTIDGYLNAFWLIAGVLGAAALTVMVCYWPGKDDLVERQTEEANAVGPLAVDKVDTSKDATASARSVADTRL</sequence>